<protein>
    <recommendedName>
        <fullName evidence="1">6,7-dimethyl-8-ribityllumazine synthase</fullName>
        <shortName evidence="1">DMRL synthase</shortName>
        <shortName evidence="1">LS</shortName>
        <shortName evidence="1">Lumazine synthase</shortName>
        <ecNumber evidence="1">2.5.1.78</ecNumber>
    </recommendedName>
</protein>
<name>RISB_SHELP</name>
<reference key="1">
    <citation type="submission" date="2007-03" db="EMBL/GenBank/DDBJ databases">
        <title>Complete sequence of Shewanella loihica PV-4.</title>
        <authorList>
            <consortium name="US DOE Joint Genome Institute"/>
            <person name="Copeland A."/>
            <person name="Lucas S."/>
            <person name="Lapidus A."/>
            <person name="Barry K."/>
            <person name="Detter J.C."/>
            <person name="Glavina del Rio T."/>
            <person name="Hammon N."/>
            <person name="Israni S."/>
            <person name="Dalin E."/>
            <person name="Tice H."/>
            <person name="Pitluck S."/>
            <person name="Chain P."/>
            <person name="Malfatti S."/>
            <person name="Shin M."/>
            <person name="Vergez L."/>
            <person name="Schmutz J."/>
            <person name="Larimer F."/>
            <person name="Land M."/>
            <person name="Hauser L."/>
            <person name="Kyrpides N."/>
            <person name="Mikhailova N."/>
            <person name="Romine M.F."/>
            <person name="Serres G."/>
            <person name="Fredrickson J."/>
            <person name="Tiedje J."/>
            <person name="Richardson P."/>
        </authorList>
    </citation>
    <scope>NUCLEOTIDE SEQUENCE [LARGE SCALE GENOMIC DNA]</scope>
    <source>
        <strain>ATCC BAA-1088 / PV-4</strain>
    </source>
</reference>
<organism>
    <name type="scientific">Shewanella loihica (strain ATCC BAA-1088 / PV-4)</name>
    <dbReference type="NCBI Taxonomy" id="323850"/>
    <lineage>
        <taxon>Bacteria</taxon>
        <taxon>Pseudomonadati</taxon>
        <taxon>Pseudomonadota</taxon>
        <taxon>Gammaproteobacteria</taxon>
        <taxon>Alteromonadales</taxon>
        <taxon>Shewanellaceae</taxon>
        <taxon>Shewanella</taxon>
    </lineage>
</organism>
<evidence type="ECO:0000255" key="1">
    <source>
        <dbReference type="HAMAP-Rule" id="MF_00178"/>
    </source>
</evidence>
<proteinExistence type="inferred from homology"/>
<keyword id="KW-1185">Reference proteome</keyword>
<keyword id="KW-0686">Riboflavin biosynthesis</keyword>
<keyword id="KW-0808">Transferase</keyword>
<feature type="chain" id="PRO_1000040511" description="6,7-dimethyl-8-ribityllumazine synthase">
    <location>
        <begin position="1"/>
        <end position="158"/>
    </location>
</feature>
<feature type="active site" description="Proton donor" evidence="1">
    <location>
        <position position="89"/>
    </location>
</feature>
<feature type="binding site" evidence="1">
    <location>
        <position position="22"/>
    </location>
    <ligand>
        <name>5-amino-6-(D-ribitylamino)uracil</name>
        <dbReference type="ChEBI" id="CHEBI:15934"/>
    </ligand>
</feature>
<feature type="binding site" evidence="1">
    <location>
        <begin position="57"/>
        <end position="59"/>
    </location>
    <ligand>
        <name>5-amino-6-(D-ribitylamino)uracil</name>
        <dbReference type="ChEBI" id="CHEBI:15934"/>
    </ligand>
</feature>
<feature type="binding site" evidence="1">
    <location>
        <begin position="81"/>
        <end position="83"/>
    </location>
    <ligand>
        <name>5-amino-6-(D-ribitylamino)uracil</name>
        <dbReference type="ChEBI" id="CHEBI:15934"/>
    </ligand>
</feature>
<feature type="binding site" evidence="1">
    <location>
        <begin position="86"/>
        <end position="87"/>
    </location>
    <ligand>
        <name>(2S)-2-hydroxy-3-oxobutyl phosphate</name>
        <dbReference type="ChEBI" id="CHEBI:58830"/>
    </ligand>
</feature>
<feature type="binding site" evidence="1">
    <location>
        <position position="114"/>
    </location>
    <ligand>
        <name>5-amino-6-(D-ribitylamino)uracil</name>
        <dbReference type="ChEBI" id="CHEBI:15934"/>
    </ligand>
</feature>
<feature type="binding site" evidence="1">
    <location>
        <position position="128"/>
    </location>
    <ligand>
        <name>(2S)-2-hydroxy-3-oxobutyl phosphate</name>
        <dbReference type="ChEBI" id="CHEBI:58830"/>
    </ligand>
</feature>
<sequence>MNVVQGNIESKNAKVAIVVSRFNSFVVESLLEGAVDTLKRFGQVADDNITVVRVPGAVELPLAARRVAASGKFDGIIALGAVIRGGTPHFDFVAGECNKGLAQIALEFDLPVSFGVLTTDTIEQAIERSGTKAGNKGGEAALGLLEMVNVLQELEQQL</sequence>
<comment type="function">
    <text evidence="1">Catalyzes the formation of 6,7-dimethyl-8-ribityllumazine by condensation of 5-amino-6-(D-ribitylamino)uracil with 3,4-dihydroxy-2-butanone 4-phosphate. This is the penultimate step in the biosynthesis of riboflavin.</text>
</comment>
<comment type="catalytic activity">
    <reaction evidence="1">
        <text>(2S)-2-hydroxy-3-oxobutyl phosphate + 5-amino-6-(D-ribitylamino)uracil = 6,7-dimethyl-8-(1-D-ribityl)lumazine + phosphate + 2 H2O + H(+)</text>
        <dbReference type="Rhea" id="RHEA:26152"/>
        <dbReference type="ChEBI" id="CHEBI:15377"/>
        <dbReference type="ChEBI" id="CHEBI:15378"/>
        <dbReference type="ChEBI" id="CHEBI:15934"/>
        <dbReference type="ChEBI" id="CHEBI:43474"/>
        <dbReference type="ChEBI" id="CHEBI:58201"/>
        <dbReference type="ChEBI" id="CHEBI:58830"/>
        <dbReference type="EC" id="2.5.1.78"/>
    </reaction>
</comment>
<comment type="pathway">
    <text evidence="1">Cofactor biosynthesis; riboflavin biosynthesis; riboflavin from 2-hydroxy-3-oxobutyl phosphate and 5-amino-6-(D-ribitylamino)uracil: step 1/2.</text>
</comment>
<comment type="subunit">
    <text evidence="1">Forms an icosahedral capsid composed of 60 subunits, arranged as a dodecamer of pentamers.</text>
</comment>
<comment type="similarity">
    <text evidence="1">Belongs to the DMRL synthase family.</text>
</comment>
<dbReference type="EC" id="2.5.1.78" evidence="1"/>
<dbReference type="EMBL" id="CP000606">
    <property type="protein sequence ID" value="ABO23060.1"/>
    <property type="molecule type" value="Genomic_DNA"/>
</dbReference>
<dbReference type="SMR" id="A3QC62"/>
<dbReference type="STRING" id="323850.Shew_1190"/>
<dbReference type="KEGG" id="slo:Shew_1190"/>
<dbReference type="eggNOG" id="COG0054">
    <property type="taxonomic scope" value="Bacteria"/>
</dbReference>
<dbReference type="HOGENOM" id="CLU_089358_1_1_6"/>
<dbReference type="OrthoDB" id="9809709at2"/>
<dbReference type="UniPathway" id="UPA00275">
    <property type="reaction ID" value="UER00404"/>
</dbReference>
<dbReference type="Proteomes" id="UP000001558">
    <property type="component" value="Chromosome"/>
</dbReference>
<dbReference type="GO" id="GO:0005829">
    <property type="term" value="C:cytosol"/>
    <property type="evidence" value="ECO:0007669"/>
    <property type="project" value="TreeGrafter"/>
</dbReference>
<dbReference type="GO" id="GO:0009349">
    <property type="term" value="C:riboflavin synthase complex"/>
    <property type="evidence" value="ECO:0007669"/>
    <property type="project" value="InterPro"/>
</dbReference>
<dbReference type="GO" id="GO:0000906">
    <property type="term" value="F:6,7-dimethyl-8-ribityllumazine synthase activity"/>
    <property type="evidence" value="ECO:0007669"/>
    <property type="project" value="UniProtKB-UniRule"/>
</dbReference>
<dbReference type="GO" id="GO:0009231">
    <property type="term" value="P:riboflavin biosynthetic process"/>
    <property type="evidence" value="ECO:0007669"/>
    <property type="project" value="UniProtKB-UniRule"/>
</dbReference>
<dbReference type="CDD" id="cd09209">
    <property type="entry name" value="Lumazine_synthase-I"/>
    <property type="match status" value="1"/>
</dbReference>
<dbReference type="FunFam" id="3.40.50.960:FF:000001">
    <property type="entry name" value="6,7-dimethyl-8-ribityllumazine synthase"/>
    <property type="match status" value="1"/>
</dbReference>
<dbReference type="Gene3D" id="3.40.50.960">
    <property type="entry name" value="Lumazine/riboflavin synthase"/>
    <property type="match status" value="1"/>
</dbReference>
<dbReference type="HAMAP" id="MF_00178">
    <property type="entry name" value="Lumazine_synth"/>
    <property type="match status" value="1"/>
</dbReference>
<dbReference type="InterPro" id="IPR034964">
    <property type="entry name" value="LS"/>
</dbReference>
<dbReference type="InterPro" id="IPR002180">
    <property type="entry name" value="LS/RS"/>
</dbReference>
<dbReference type="InterPro" id="IPR036467">
    <property type="entry name" value="LS/RS_sf"/>
</dbReference>
<dbReference type="NCBIfam" id="TIGR00114">
    <property type="entry name" value="lumazine-synth"/>
    <property type="match status" value="1"/>
</dbReference>
<dbReference type="NCBIfam" id="NF000812">
    <property type="entry name" value="PRK00061.1-4"/>
    <property type="match status" value="1"/>
</dbReference>
<dbReference type="PANTHER" id="PTHR21058:SF0">
    <property type="entry name" value="6,7-DIMETHYL-8-RIBITYLLUMAZINE SYNTHASE"/>
    <property type="match status" value="1"/>
</dbReference>
<dbReference type="PANTHER" id="PTHR21058">
    <property type="entry name" value="6,7-DIMETHYL-8-RIBITYLLUMAZINE SYNTHASE DMRL SYNTHASE LUMAZINE SYNTHASE"/>
    <property type="match status" value="1"/>
</dbReference>
<dbReference type="Pfam" id="PF00885">
    <property type="entry name" value="DMRL_synthase"/>
    <property type="match status" value="1"/>
</dbReference>
<dbReference type="SUPFAM" id="SSF52121">
    <property type="entry name" value="Lumazine synthase"/>
    <property type="match status" value="1"/>
</dbReference>
<accession>A3QC62</accession>
<gene>
    <name evidence="1" type="primary">ribH</name>
    <name type="ordered locus">Shew_1190</name>
</gene>